<accession>Q4K534</accession>
<gene>
    <name evidence="1" type="primary">rplD</name>
    <name type="ordered locus">PFL_5581</name>
</gene>
<reference key="1">
    <citation type="journal article" date="2005" name="Nat. Biotechnol.">
        <title>Complete genome sequence of the plant commensal Pseudomonas fluorescens Pf-5.</title>
        <authorList>
            <person name="Paulsen I.T."/>
            <person name="Press C.M."/>
            <person name="Ravel J."/>
            <person name="Kobayashi D.Y."/>
            <person name="Myers G.S.A."/>
            <person name="Mavrodi D.V."/>
            <person name="DeBoy R.T."/>
            <person name="Seshadri R."/>
            <person name="Ren Q."/>
            <person name="Madupu R."/>
            <person name="Dodson R.J."/>
            <person name="Durkin A.S."/>
            <person name="Brinkac L.M."/>
            <person name="Daugherty S.C."/>
            <person name="Sullivan S.A."/>
            <person name="Rosovitz M.J."/>
            <person name="Gwinn M.L."/>
            <person name="Zhou L."/>
            <person name="Schneider D.J."/>
            <person name="Cartinhour S.W."/>
            <person name="Nelson W.C."/>
            <person name="Weidman J."/>
            <person name="Watkins K."/>
            <person name="Tran K."/>
            <person name="Khouri H."/>
            <person name="Pierson E.A."/>
            <person name="Pierson L.S. III"/>
            <person name="Thomashow L.S."/>
            <person name="Loper J.E."/>
        </authorList>
    </citation>
    <scope>NUCLEOTIDE SEQUENCE [LARGE SCALE GENOMIC DNA]</scope>
    <source>
        <strain>ATCC BAA-477 / NRRL B-23932 / Pf-5</strain>
    </source>
</reference>
<name>RL4_PSEF5</name>
<sequence>MQLNVNDAQAIEVSELTFGGEFNETLVHQAVVAYMAGGRQGSKQQKTRSDVSGGGKRPWRQKGTGRARAGTIRSPIWRGGGTTFAARPQDHSQKLNKKMYRAAMRSILAELVRTDRLVVVQDFAVETPKTKDLLGKLNNMSLTDVLIVSDAVDQNLYLAARNLPHVDVRDVQGSDPVSLIAYDKVLITVSAVKKFEELLG</sequence>
<proteinExistence type="inferred from homology"/>
<dbReference type="EMBL" id="CP000076">
    <property type="protein sequence ID" value="AAY94786.1"/>
    <property type="molecule type" value="Genomic_DNA"/>
</dbReference>
<dbReference type="RefSeq" id="WP_007924200.1">
    <property type="nucleotide sequence ID" value="NC_004129.6"/>
</dbReference>
<dbReference type="SMR" id="Q4K534"/>
<dbReference type="STRING" id="220664.PFL_5581"/>
<dbReference type="GeneID" id="93406147"/>
<dbReference type="KEGG" id="pfl:PFL_5581"/>
<dbReference type="PATRIC" id="fig|220664.5.peg.5698"/>
<dbReference type="eggNOG" id="COG0088">
    <property type="taxonomic scope" value="Bacteria"/>
</dbReference>
<dbReference type="HOGENOM" id="CLU_041575_5_2_6"/>
<dbReference type="Proteomes" id="UP000008540">
    <property type="component" value="Chromosome"/>
</dbReference>
<dbReference type="GO" id="GO:1990904">
    <property type="term" value="C:ribonucleoprotein complex"/>
    <property type="evidence" value="ECO:0007669"/>
    <property type="project" value="UniProtKB-KW"/>
</dbReference>
<dbReference type="GO" id="GO:0005840">
    <property type="term" value="C:ribosome"/>
    <property type="evidence" value="ECO:0007669"/>
    <property type="project" value="UniProtKB-KW"/>
</dbReference>
<dbReference type="GO" id="GO:0019843">
    <property type="term" value="F:rRNA binding"/>
    <property type="evidence" value="ECO:0007669"/>
    <property type="project" value="UniProtKB-UniRule"/>
</dbReference>
<dbReference type="GO" id="GO:0003735">
    <property type="term" value="F:structural constituent of ribosome"/>
    <property type="evidence" value="ECO:0007669"/>
    <property type="project" value="InterPro"/>
</dbReference>
<dbReference type="GO" id="GO:0006412">
    <property type="term" value="P:translation"/>
    <property type="evidence" value="ECO:0007669"/>
    <property type="project" value="UniProtKB-UniRule"/>
</dbReference>
<dbReference type="FunFam" id="3.40.1370.10:FF:000001">
    <property type="entry name" value="50S ribosomal protein L4"/>
    <property type="match status" value="1"/>
</dbReference>
<dbReference type="Gene3D" id="3.40.1370.10">
    <property type="match status" value="1"/>
</dbReference>
<dbReference type="HAMAP" id="MF_01328_B">
    <property type="entry name" value="Ribosomal_uL4_B"/>
    <property type="match status" value="1"/>
</dbReference>
<dbReference type="InterPro" id="IPR002136">
    <property type="entry name" value="Ribosomal_uL4"/>
</dbReference>
<dbReference type="InterPro" id="IPR013005">
    <property type="entry name" value="Ribosomal_uL4-like"/>
</dbReference>
<dbReference type="InterPro" id="IPR023574">
    <property type="entry name" value="Ribosomal_uL4_dom_sf"/>
</dbReference>
<dbReference type="NCBIfam" id="TIGR03953">
    <property type="entry name" value="rplD_bact"/>
    <property type="match status" value="1"/>
</dbReference>
<dbReference type="PANTHER" id="PTHR10746">
    <property type="entry name" value="50S RIBOSOMAL PROTEIN L4"/>
    <property type="match status" value="1"/>
</dbReference>
<dbReference type="PANTHER" id="PTHR10746:SF6">
    <property type="entry name" value="LARGE RIBOSOMAL SUBUNIT PROTEIN UL4M"/>
    <property type="match status" value="1"/>
</dbReference>
<dbReference type="Pfam" id="PF00573">
    <property type="entry name" value="Ribosomal_L4"/>
    <property type="match status" value="1"/>
</dbReference>
<dbReference type="SUPFAM" id="SSF52166">
    <property type="entry name" value="Ribosomal protein L4"/>
    <property type="match status" value="1"/>
</dbReference>
<organism>
    <name type="scientific">Pseudomonas fluorescens (strain ATCC BAA-477 / NRRL B-23932 / Pf-5)</name>
    <dbReference type="NCBI Taxonomy" id="220664"/>
    <lineage>
        <taxon>Bacteria</taxon>
        <taxon>Pseudomonadati</taxon>
        <taxon>Pseudomonadota</taxon>
        <taxon>Gammaproteobacteria</taxon>
        <taxon>Pseudomonadales</taxon>
        <taxon>Pseudomonadaceae</taxon>
        <taxon>Pseudomonas</taxon>
    </lineage>
</organism>
<evidence type="ECO:0000255" key="1">
    <source>
        <dbReference type="HAMAP-Rule" id="MF_01328"/>
    </source>
</evidence>
<evidence type="ECO:0000256" key="2">
    <source>
        <dbReference type="SAM" id="MobiDB-lite"/>
    </source>
</evidence>
<evidence type="ECO:0000305" key="3"/>
<feature type="chain" id="PRO_0000242416" description="Large ribosomal subunit protein uL4">
    <location>
        <begin position="1"/>
        <end position="200"/>
    </location>
</feature>
<feature type="region of interest" description="Disordered" evidence="2">
    <location>
        <begin position="38"/>
        <end position="72"/>
    </location>
</feature>
<keyword id="KW-0687">Ribonucleoprotein</keyword>
<keyword id="KW-0689">Ribosomal protein</keyword>
<keyword id="KW-0694">RNA-binding</keyword>
<keyword id="KW-0699">rRNA-binding</keyword>
<comment type="function">
    <text evidence="1">One of the primary rRNA binding proteins, this protein initially binds near the 5'-end of the 23S rRNA. It is important during the early stages of 50S assembly. It makes multiple contacts with different domains of the 23S rRNA in the assembled 50S subunit and ribosome.</text>
</comment>
<comment type="function">
    <text evidence="1">Forms part of the polypeptide exit tunnel.</text>
</comment>
<comment type="subunit">
    <text evidence="1">Part of the 50S ribosomal subunit.</text>
</comment>
<comment type="similarity">
    <text evidence="1">Belongs to the universal ribosomal protein uL4 family.</text>
</comment>
<protein>
    <recommendedName>
        <fullName evidence="1">Large ribosomal subunit protein uL4</fullName>
    </recommendedName>
    <alternativeName>
        <fullName evidence="3">50S ribosomal protein L4</fullName>
    </alternativeName>
</protein>